<comment type="function">
    <text evidence="1">Exhibits a very high intrinsic GTPase hydrolysis rate. Involved in the addition of a carboxymethylaminomethyl (cmnm) group at the wobble position (U34) of certain tRNAs, forming tRNA-cmnm(5)s(2)U34.</text>
</comment>
<comment type="cofactor">
    <cofactor evidence="1">
        <name>K(+)</name>
        <dbReference type="ChEBI" id="CHEBI:29103"/>
    </cofactor>
    <text evidence="1">Binds 1 potassium ion per subunit.</text>
</comment>
<comment type="subunit">
    <text evidence="1">Homodimer. Heterotetramer of two MnmE and two MnmG subunits.</text>
</comment>
<comment type="subcellular location">
    <subcellularLocation>
        <location evidence="1">Cytoplasm</location>
    </subcellularLocation>
</comment>
<comment type="similarity">
    <text evidence="1">Belongs to the TRAFAC class TrmE-Era-EngA-EngB-Septin-like GTPase superfamily. TrmE GTPase family.</text>
</comment>
<evidence type="ECO:0000255" key="1">
    <source>
        <dbReference type="HAMAP-Rule" id="MF_00379"/>
    </source>
</evidence>
<sequence>MAQVLTQFDTIAAISTPIGEGGISIVRLSGEDAVAIANKLFKGADLTKVPTHTIHYGHIVDPKTKEVVDETMVSVLRAPKTFTREDMVEINCHGGMIVTNDILQLLLANGARMADPGEFTKRAFMNGRIDLTQAESVMDIVRAKTDKSRQVAMTQLAGGLLDKIKTMRQELLDTMAHEEVNIDYPEYDMDDLTSQEMKKKAQEVSKQIEQLLQTAQEGKIIRNGLATAIVGRPNVGKSSLLNYLTQDDKAIVTDIAGTTRDTLEEYVSVKGVPLKLIDTAGIHHTEDKVEKIGVERSKKAIKEADLVLLLLDASQDLTAEDKRLLDLTANKKRIIILNKQDLGTKISQEMIKDITDNPIIVTSILKQKNMDALENAIEKLFFSGIENSQNQILVTNQRQAGLLTKAKQSLEDVISGIDDAMPLDLVQIDLKNAWDTLGEITGESAPDELITQLFSQFCLGK</sequence>
<keyword id="KW-0963">Cytoplasm</keyword>
<keyword id="KW-0342">GTP-binding</keyword>
<keyword id="KW-0378">Hydrolase</keyword>
<keyword id="KW-0460">Magnesium</keyword>
<keyword id="KW-0479">Metal-binding</keyword>
<keyword id="KW-0547">Nucleotide-binding</keyword>
<keyword id="KW-0630">Potassium</keyword>
<keyword id="KW-0819">tRNA processing</keyword>
<accession>Q040F3</accession>
<organism>
    <name type="scientific">Lactobacillus gasseri (strain ATCC 33323 / DSM 20243 / BCRC 14619 / CIP 102991 / JCM 1131 / KCTC 3163 / NCIMB 11718 / NCTC 13722 / AM63)</name>
    <dbReference type="NCBI Taxonomy" id="324831"/>
    <lineage>
        <taxon>Bacteria</taxon>
        <taxon>Bacillati</taxon>
        <taxon>Bacillota</taxon>
        <taxon>Bacilli</taxon>
        <taxon>Lactobacillales</taxon>
        <taxon>Lactobacillaceae</taxon>
        <taxon>Lactobacillus</taxon>
    </lineage>
</organism>
<protein>
    <recommendedName>
        <fullName evidence="1">tRNA modification GTPase MnmE</fullName>
        <ecNumber evidence="1">3.6.-.-</ecNumber>
    </recommendedName>
</protein>
<dbReference type="EC" id="3.6.-.-" evidence="1"/>
<dbReference type="EMBL" id="CP000413">
    <property type="protein sequence ID" value="ABJ61169.1"/>
    <property type="molecule type" value="Genomic_DNA"/>
</dbReference>
<dbReference type="RefSeq" id="WP_003648144.1">
    <property type="nucleotide sequence ID" value="NZ_WBMG01000006.1"/>
</dbReference>
<dbReference type="SMR" id="Q040F3"/>
<dbReference type="GeneID" id="29639644"/>
<dbReference type="KEGG" id="lga:LGAS_1895"/>
<dbReference type="HOGENOM" id="CLU_019624_4_1_9"/>
<dbReference type="BioCyc" id="LGAS324831:G1G6Y-1888-MONOMER"/>
<dbReference type="Proteomes" id="UP000000664">
    <property type="component" value="Chromosome"/>
</dbReference>
<dbReference type="GO" id="GO:0005829">
    <property type="term" value="C:cytosol"/>
    <property type="evidence" value="ECO:0007669"/>
    <property type="project" value="TreeGrafter"/>
</dbReference>
<dbReference type="GO" id="GO:0005525">
    <property type="term" value="F:GTP binding"/>
    <property type="evidence" value="ECO:0007669"/>
    <property type="project" value="UniProtKB-UniRule"/>
</dbReference>
<dbReference type="GO" id="GO:0003924">
    <property type="term" value="F:GTPase activity"/>
    <property type="evidence" value="ECO:0007669"/>
    <property type="project" value="UniProtKB-UniRule"/>
</dbReference>
<dbReference type="GO" id="GO:0046872">
    <property type="term" value="F:metal ion binding"/>
    <property type="evidence" value="ECO:0007669"/>
    <property type="project" value="UniProtKB-KW"/>
</dbReference>
<dbReference type="GO" id="GO:0030488">
    <property type="term" value="P:tRNA methylation"/>
    <property type="evidence" value="ECO:0007669"/>
    <property type="project" value="TreeGrafter"/>
</dbReference>
<dbReference type="GO" id="GO:0002098">
    <property type="term" value="P:tRNA wobble uridine modification"/>
    <property type="evidence" value="ECO:0007669"/>
    <property type="project" value="TreeGrafter"/>
</dbReference>
<dbReference type="CDD" id="cd04164">
    <property type="entry name" value="trmE"/>
    <property type="match status" value="1"/>
</dbReference>
<dbReference type="CDD" id="cd14858">
    <property type="entry name" value="TrmE_N"/>
    <property type="match status" value="1"/>
</dbReference>
<dbReference type="FunFam" id="3.30.1360.120:FF:000003">
    <property type="entry name" value="tRNA modification GTPase MnmE"/>
    <property type="match status" value="1"/>
</dbReference>
<dbReference type="FunFam" id="3.40.50.300:FF:000494">
    <property type="entry name" value="tRNA modification GTPase MnmE"/>
    <property type="match status" value="1"/>
</dbReference>
<dbReference type="Gene3D" id="3.40.50.300">
    <property type="entry name" value="P-loop containing nucleotide triphosphate hydrolases"/>
    <property type="match status" value="1"/>
</dbReference>
<dbReference type="Gene3D" id="3.30.1360.120">
    <property type="entry name" value="Probable tRNA modification gtpase trme, domain 1"/>
    <property type="match status" value="1"/>
</dbReference>
<dbReference type="Gene3D" id="1.20.120.430">
    <property type="entry name" value="tRNA modification GTPase MnmE domain 2"/>
    <property type="match status" value="1"/>
</dbReference>
<dbReference type="HAMAP" id="MF_00379">
    <property type="entry name" value="GTPase_MnmE"/>
    <property type="match status" value="1"/>
</dbReference>
<dbReference type="InterPro" id="IPR031168">
    <property type="entry name" value="G_TrmE"/>
</dbReference>
<dbReference type="InterPro" id="IPR006073">
    <property type="entry name" value="GTP-bd"/>
</dbReference>
<dbReference type="InterPro" id="IPR018948">
    <property type="entry name" value="GTP-bd_TrmE_N"/>
</dbReference>
<dbReference type="InterPro" id="IPR004520">
    <property type="entry name" value="GTPase_MnmE"/>
</dbReference>
<dbReference type="InterPro" id="IPR027368">
    <property type="entry name" value="MnmE_dom2"/>
</dbReference>
<dbReference type="InterPro" id="IPR025867">
    <property type="entry name" value="MnmE_helical"/>
</dbReference>
<dbReference type="InterPro" id="IPR027417">
    <property type="entry name" value="P-loop_NTPase"/>
</dbReference>
<dbReference type="InterPro" id="IPR005225">
    <property type="entry name" value="Small_GTP-bd"/>
</dbReference>
<dbReference type="InterPro" id="IPR027266">
    <property type="entry name" value="TrmE/GcvT_dom1"/>
</dbReference>
<dbReference type="NCBIfam" id="TIGR00450">
    <property type="entry name" value="mnmE_trmE_thdF"/>
    <property type="match status" value="1"/>
</dbReference>
<dbReference type="NCBIfam" id="NF003661">
    <property type="entry name" value="PRK05291.1-3"/>
    <property type="match status" value="1"/>
</dbReference>
<dbReference type="NCBIfam" id="TIGR00231">
    <property type="entry name" value="small_GTP"/>
    <property type="match status" value="1"/>
</dbReference>
<dbReference type="PANTHER" id="PTHR42714">
    <property type="entry name" value="TRNA MODIFICATION GTPASE GTPBP3"/>
    <property type="match status" value="1"/>
</dbReference>
<dbReference type="PANTHER" id="PTHR42714:SF2">
    <property type="entry name" value="TRNA MODIFICATION GTPASE GTPBP3, MITOCHONDRIAL"/>
    <property type="match status" value="1"/>
</dbReference>
<dbReference type="Pfam" id="PF01926">
    <property type="entry name" value="MMR_HSR1"/>
    <property type="match status" value="1"/>
</dbReference>
<dbReference type="Pfam" id="PF12631">
    <property type="entry name" value="MnmE_helical"/>
    <property type="match status" value="1"/>
</dbReference>
<dbReference type="Pfam" id="PF10396">
    <property type="entry name" value="TrmE_N"/>
    <property type="match status" value="1"/>
</dbReference>
<dbReference type="PRINTS" id="PR00326">
    <property type="entry name" value="GTP1OBG"/>
</dbReference>
<dbReference type="SUPFAM" id="SSF52540">
    <property type="entry name" value="P-loop containing nucleoside triphosphate hydrolases"/>
    <property type="match status" value="1"/>
</dbReference>
<dbReference type="PROSITE" id="PS51709">
    <property type="entry name" value="G_TRME"/>
    <property type="match status" value="1"/>
</dbReference>
<reference key="1">
    <citation type="journal article" date="2006" name="Proc. Natl. Acad. Sci. U.S.A.">
        <title>Comparative genomics of the lactic acid bacteria.</title>
        <authorList>
            <person name="Makarova K.S."/>
            <person name="Slesarev A."/>
            <person name="Wolf Y.I."/>
            <person name="Sorokin A."/>
            <person name="Mirkin B."/>
            <person name="Koonin E.V."/>
            <person name="Pavlov A."/>
            <person name="Pavlova N."/>
            <person name="Karamychev V."/>
            <person name="Polouchine N."/>
            <person name="Shakhova V."/>
            <person name="Grigoriev I."/>
            <person name="Lou Y."/>
            <person name="Rohksar D."/>
            <person name="Lucas S."/>
            <person name="Huang K."/>
            <person name="Goodstein D.M."/>
            <person name="Hawkins T."/>
            <person name="Plengvidhya V."/>
            <person name="Welker D."/>
            <person name="Hughes J."/>
            <person name="Goh Y."/>
            <person name="Benson A."/>
            <person name="Baldwin K."/>
            <person name="Lee J.-H."/>
            <person name="Diaz-Muniz I."/>
            <person name="Dosti B."/>
            <person name="Smeianov V."/>
            <person name="Wechter W."/>
            <person name="Barabote R."/>
            <person name="Lorca G."/>
            <person name="Altermann E."/>
            <person name="Barrangou R."/>
            <person name="Ganesan B."/>
            <person name="Xie Y."/>
            <person name="Rawsthorne H."/>
            <person name="Tamir D."/>
            <person name="Parker C."/>
            <person name="Breidt F."/>
            <person name="Broadbent J.R."/>
            <person name="Hutkins R."/>
            <person name="O'Sullivan D."/>
            <person name="Steele J."/>
            <person name="Unlu G."/>
            <person name="Saier M.H. Jr."/>
            <person name="Klaenhammer T."/>
            <person name="Richardson P."/>
            <person name="Kozyavkin S."/>
            <person name="Weimer B.C."/>
            <person name="Mills D.A."/>
        </authorList>
    </citation>
    <scope>NUCLEOTIDE SEQUENCE [LARGE SCALE GENOMIC DNA]</scope>
    <source>
        <strain>ATCC 33323 / DSM 20243 / BCRC 14619 / CIP 102991 / JCM 1131 / KCTC 3163 / NCIMB 11718 / NCTC 13722 / AM63</strain>
    </source>
</reference>
<name>MNME_LACGA</name>
<feature type="chain" id="PRO_0000345809" description="tRNA modification GTPase MnmE">
    <location>
        <begin position="1"/>
        <end position="461"/>
    </location>
</feature>
<feature type="domain" description="TrmE-type G">
    <location>
        <begin position="224"/>
        <end position="382"/>
    </location>
</feature>
<feature type="binding site" evidence="1">
    <location>
        <position position="27"/>
    </location>
    <ligand>
        <name>(6S)-5-formyl-5,6,7,8-tetrahydrofolate</name>
        <dbReference type="ChEBI" id="CHEBI:57457"/>
    </ligand>
</feature>
<feature type="binding site" evidence="1">
    <location>
        <position position="89"/>
    </location>
    <ligand>
        <name>(6S)-5-formyl-5,6,7,8-tetrahydrofolate</name>
        <dbReference type="ChEBI" id="CHEBI:57457"/>
    </ligand>
</feature>
<feature type="binding site" evidence="1">
    <location>
        <position position="128"/>
    </location>
    <ligand>
        <name>(6S)-5-formyl-5,6,7,8-tetrahydrofolate</name>
        <dbReference type="ChEBI" id="CHEBI:57457"/>
    </ligand>
</feature>
<feature type="binding site" evidence="1">
    <location>
        <begin position="234"/>
        <end position="239"/>
    </location>
    <ligand>
        <name>GTP</name>
        <dbReference type="ChEBI" id="CHEBI:37565"/>
    </ligand>
</feature>
<feature type="binding site" evidence="1">
    <location>
        <position position="234"/>
    </location>
    <ligand>
        <name>K(+)</name>
        <dbReference type="ChEBI" id="CHEBI:29103"/>
    </ligand>
</feature>
<feature type="binding site" evidence="1">
    <location>
        <position position="238"/>
    </location>
    <ligand>
        <name>Mg(2+)</name>
        <dbReference type="ChEBI" id="CHEBI:18420"/>
    </ligand>
</feature>
<feature type="binding site" evidence="1">
    <location>
        <begin position="253"/>
        <end position="259"/>
    </location>
    <ligand>
        <name>GTP</name>
        <dbReference type="ChEBI" id="CHEBI:37565"/>
    </ligand>
</feature>
<feature type="binding site" evidence="1">
    <location>
        <position position="253"/>
    </location>
    <ligand>
        <name>K(+)</name>
        <dbReference type="ChEBI" id="CHEBI:29103"/>
    </ligand>
</feature>
<feature type="binding site" evidence="1">
    <location>
        <position position="255"/>
    </location>
    <ligand>
        <name>K(+)</name>
        <dbReference type="ChEBI" id="CHEBI:29103"/>
    </ligand>
</feature>
<feature type="binding site" evidence="1">
    <location>
        <position position="258"/>
    </location>
    <ligand>
        <name>K(+)</name>
        <dbReference type="ChEBI" id="CHEBI:29103"/>
    </ligand>
</feature>
<feature type="binding site" evidence="1">
    <location>
        <position position="259"/>
    </location>
    <ligand>
        <name>Mg(2+)</name>
        <dbReference type="ChEBI" id="CHEBI:18420"/>
    </ligand>
</feature>
<feature type="binding site" evidence="1">
    <location>
        <begin position="278"/>
        <end position="281"/>
    </location>
    <ligand>
        <name>GTP</name>
        <dbReference type="ChEBI" id="CHEBI:37565"/>
    </ligand>
</feature>
<feature type="binding site" evidence="1">
    <location>
        <position position="461"/>
    </location>
    <ligand>
        <name>(6S)-5-formyl-5,6,7,8-tetrahydrofolate</name>
        <dbReference type="ChEBI" id="CHEBI:57457"/>
    </ligand>
</feature>
<gene>
    <name evidence="1" type="primary">mnmE</name>
    <name evidence="1" type="synonym">trmE</name>
    <name type="ordered locus">LGAS_1895</name>
</gene>
<proteinExistence type="inferred from homology"/>